<keyword id="KW-0028">Amino-acid biosynthesis</keyword>
<keyword id="KW-0067">ATP-binding</keyword>
<keyword id="KW-0963">Cytoplasm</keyword>
<keyword id="KW-0368">Histidine biosynthesis</keyword>
<keyword id="KW-0378">Hydrolase</keyword>
<keyword id="KW-0547">Nucleotide-binding</keyword>
<keyword id="KW-1185">Reference proteome</keyword>
<protein>
    <recommendedName>
        <fullName evidence="1">Phosphoribosyl-ATP pyrophosphatase</fullName>
        <shortName evidence="1">PRA-PH</shortName>
        <ecNumber evidence="1">3.6.1.31</ecNumber>
    </recommendedName>
</protein>
<comment type="catalytic activity">
    <reaction evidence="1">
        <text>1-(5-phospho-beta-D-ribosyl)-ATP + H2O = 1-(5-phospho-beta-D-ribosyl)-5'-AMP + diphosphate + H(+)</text>
        <dbReference type="Rhea" id="RHEA:22828"/>
        <dbReference type="ChEBI" id="CHEBI:15377"/>
        <dbReference type="ChEBI" id="CHEBI:15378"/>
        <dbReference type="ChEBI" id="CHEBI:33019"/>
        <dbReference type="ChEBI" id="CHEBI:59457"/>
        <dbReference type="ChEBI" id="CHEBI:73183"/>
        <dbReference type="EC" id="3.6.1.31"/>
    </reaction>
</comment>
<comment type="pathway">
    <text evidence="1">Amino-acid biosynthesis; L-histidine biosynthesis; L-histidine from 5-phospho-alpha-D-ribose 1-diphosphate: step 2/9.</text>
</comment>
<comment type="subcellular location">
    <subcellularLocation>
        <location evidence="1">Cytoplasm</location>
    </subcellularLocation>
</comment>
<comment type="similarity">
    <text evidence="1">Belongs to the PRA-PH family.</text>
</comment>
<accession>A4VGE1</accession>
<sequence>MSDTLTRLAEVLEARKGAAPDSSYVASLYHKGLNKILEKVGEESVETILAAKDAAVSGDSSDLIYETADLWFHSLVMLAALGQHPQAVLDELDRRFGLSGHAEKAARPQT</sequence>
<dbReference type="EC" id="3.6.1.31" evidence="1"/>
<dbReference type="EMBL" id="CP000304">
    <property type="protein sequence ID" value="ABP78042.1"/>
    <property type="molecule type" value="Genomic_DNA"/>
</dbReference>
<dbReference type="RefSeq" id="WP_011911574.1">
    <property type="nucleotide sequence ID" value="NC_009434.1"/>
</dbReference>
<dbReference type="SMR" id="A4VGE1"/>
<dbReference type="KEGG" id="psa:PST_0336"/>
<dbReference type="eggNOG" id="COG0140">
    <property type="taxonomic scope" value="Bacteria"/>
</dbReference>
<dbReference type="HOGENOM" id="CLU_123337_1_2_6"/>
<dbReference type="UniPathway" id="UPA00031">
    <property type="reaction ID" value="UER00007"/>
</dbReference>
<dbReference type="Proteomes" id="UP000000233">
    <property type="component" value="Chromosome"/>
</dbReference>
<dbReference type="GO" id="GO:0005737">
    <property type="term" value="C:cytoplasm"/>
    <property type="evidence" value="ECO:0007669"/>
    <property type="project" value="UniProtKB-SubCell"/>
</dbReference>
<dbReference type="GO" id="GO:0005524">
    <property type="term" value="F:ATP binding"/>
    <property type="evidence" value="ECO:0007669"/>
    <property type="project" value="UniProtKB-KW"/>
</dbReference>
<dbReference type="GO" id="GO:0004636">
    <property type="term" value="F:phosphoribosyl-ATP diphosphatase activity"/>
    <property type="evidence" value="ECO:0007669"/>
    <property type="project" value="UniProtKB-UniRule"/>
</dbReference>
<dbReference type="GO" id="GO:0000105">
    <property type="term" value="P:L-histidine biosynthetic process"/>
    <property type="evidence" value="ECO:0007669"/>
    <property type="project" value="UniProtKB-UniRule"/>
</dbReference>
<dbReference type="CDD" id="cd11534">
    <property type="entry name" value="NTP-PPase_HisIE_like"/>
    <property type="match status" value="1"/>
</dbReference>
<dbReference type="Gene3D" id="1.10.287.1080">
    <property type="entry name" value="MazG-like"/>
    <property type="match status" value="1"/>
</dbReference>
<dbReference type="HAMAP" id="MF_01020">
    <property type="entry name" value="HisE"/>
    <property type="match status" value="1"/>
</dbReference>
<dbReference type="InterPro" id="IPR008179">
    <property type="entry name" value="HisE"/>
</dbReference>
<dbReference type="InterPro" id="IPR021130">
    <property type="entry name" value="PRib-ATP_PPHydrolase-like"/>
</dbReference>
<dbReference type="NCBIfam" id="TIGR03188">
    <property type="entry name" value="histidine_hisI"/>
    <property type="match status" value="1"/>
</dbReference>
<dbReference type="NCBIfam" id="NF001611">
    <property type="entry name" value="PRK00400.1-3"/>
    <property type="match status" value="1"/>
</dbReference>
<dbReference type="PANTHER" id="PTHR42945">
    <property type="entry name" value="HISTIDINE BIOSYNTHESIS BIFUNCTIONAL PROTEIN"/>
    <property type="match status" value="1"/>
</dbReference>
<dbReference type="PANTHER" id="PTHR42945:SF9">
    <property type="entry name" value="HISTIDINE BIOSYNTHESIS BIFUNCTIONAL PROTEIN HISIE"/>
    <property type="match status" value="1"/>
</dbReference>
<dbReference type="Pfam" id="PF01503">
    <property type="entry name" value="PRA-PH"/>
    <property type="match status" value="1"/>
</dbReference>
<dbReference type="SUPFAM" id="SSF101386">
    <property type="entry name" value="all-alpha NTP pyrophosphatases"/>
    <property type="match status" value="1"/>
</dbReference>
<feature type="chain" id="PRO_1000063373" description="Phosphoribosyl-ATP pyrophosphatase">
    <location>
        <begin position="1"/>
        <end position="110"/>
    </location>
</feature>
<reference key="1">
    <citation type="journal article" date="2008" name="Proc. Natl. Acad. Sci. U.S.A.">
        <title>Nitrogen fixation island and rhizosphere competence traits in the genome of root-associated Pseudomonas stutzeri A1501.</title>
        <authorList>
            <person name="Yan Y."/>
            <person name="Yang J."/>
            <person name="Dou Y."/>
            <person name="Chen M."/>
            <person name="Ping S."/>
            <person name="Peng J."/>
            <person name="Lu W."/>
            <person name="Zhang W."/>
            <person name="Yao Z."/>
            <person name="Li H."/>
            <person name="Liu W."/>
            <person name="He S."/>
            <person name="Geng L."/>
            <person name="Zhang X."/>
            <person name="Yang F."/>
            <person name="Yu H."/>
            <person name="Zhan Y."/>
            <person name="Li D."/>
            <person name="Lin Z."/>
            <person name="Wang Y."/>
            <person name="Elmerich C."/>
            <person name="Lin M."/>
            <person name="Jin Q."/>
        </authorList>
    </citation>
    <scope>NUCLEOTIDE SEQUENCE [LARGE SCALE GENOMIC DNA]</scope>
    <source>
        <strain>A1501</strain>
    </source>
</reference>
<evidence type="ECO:0000255" key="1">
    <source>
        <dbReference type="HAMAP-Rule" id="MF_01020"/>
    </source>
</evidence>
<name>HIS2_STUS1</name>
<proteinExistence type="inferred from homology"/>
<organism>
    <name type="scientific">Stutzerimonas stutzeri (strain A1501)</name>
    <name type="common">Pseudomonas stutzeri</name>
    <dbReference type="NCBI Taxonomy" id="379731"/>
    <lineage>
        <taxon>Bacteria</taxon>
        <taxon>Pseudomonadati</taxon>
        <taxon>Pseudomonadota</taxon>
        <taxon>Gammaproteobacteria</taxon>
        <taxon>Pseudomonadales</taxon>
        <taxon>Pseudomonadaceae</taxon>
        <taxon>Stutzerimonas</taxon>
    </lineage>
</organism>
<gene>
    <name evidence="1" type="primary">hisE</name>
    <name type="ordered locus">PST_0336</name>
</gene>